<reference key="1">
    <citation type="journal article" date="2005" name="Nature">
        <title>Generation and annotation of the DNA sequences of human chromosomes 2 and 4.</title>
        <authorList>
            <person name="Hillier L.W."/>
            <person name="Graves T.A."/>
            <person name="Fulton R.S."/>
            <person name="Fulton L.A."/>
            <person name="Pepin K.H."/>
            <person name="Minx P."/>
            <person name="Wagner-McPherson C."/>
            <person name="Layman D."/>
            <person name="Wylie K."/>
            <person name="Sekhon M."/>
            <person name="Becker M.C."/>
            <person name="Fewell G.A."/>
            <person name="Delehaunty K.D."/>
            <person name="Miner T.L."/>
            <person name="Nash W.E."/>
            <person name="Kremitzki C."/>
            <person name="Oddy L."/>
            <person name="Du H."/>
            <person name="Sun H."/>
            <person name="Bradshaw-Cordum H."/>
            <person name="Ali J."/>
            <person name="Carter J."/>
            <person name="Cordes M."/>
            <person name="Harris A."/>
            <person name="Isak A."/>
            <person name="van Brunt A."/>
            <person name="Nguyen C."/>
            <person name="Du F."/>
            <person name="Courtney L."/>
            <person name="Kalicki J."/>
            <person name="Ozersky P."/>
            <person name="Abbott S."/>
            <person name="Armstrong J."/>
            <person name="Belter E.A."/>
            <person name="Caruso L."/>
            <person name="Cedroni M."/>
            <person name="Cotton M."/>
            <person name="Davidson T."/>
            <person name="Desai A."/>
            <person name="Elliott G."/>
            <person name="Erb T."/>
            <person name="Fronick C."/>
            <person name="Gaige T."/>
            <person name="Haakenson W."/>
            <person name="Haglund K."/>
            <person name="Holmes A."/>
            <person name="Harkins R."/>
            <person name="Kim K."/>
            <person name="Kruchowski S.S."/>
            <person name="Strong C.M."/>
            <person name="Grewal N."/>
            <person name="Goyea E."/>
            <person name="Hou S."/>
            <person name="Levy A."/>
            <person name="Martinka S."/>
            <person name="Mead K."/>
            <person name="McLellan M.D."/>
            <person name="Meyer R."/>
            <person name="Randall-Maher J."/>
            <person name="Tomlinson C."/>
            <person name="Dauphin-Kohlberg S."/>
            <person name="Kozlowicz-Reilly A."/>
            <person name="Shah N."/>
            <person name="Swearengen-Shahid S."/>
            <person name="Snider J."/>
            <person name="Strong J.T."/>
            <person name="Thompson J."/>
            <person name="Yoakum M."/>
            <person name="Leonard S."/>
            <person name="Pearman C."/>
            <person name="Trani L."/>
            <person name="Radionenko M."/>
            <person name="Waligorski J.E."/>
            <person name="Wang C."/>
            <person name="Rock S.M."/>
            <person name="Tin-Wollam A.-M."/>
            <person name="Maupin R."/>
            <person name="Latreille P."/>
            <person name="Wendl M.C."/>
            <person name="Yang S.-P."/>
            <person name="Pohl C."/>
            <person name="Wallis J.W."/>
            <person name="Spieth J."/>
            <person name="Bieri T.A."/>
            <person name="Berkowicz N."/>
            <person name="Nelson J.O."/>
            <person name="Osborne J."/>
            <person name="Ding L."/>
            <person name="Meyer R."/>
            <person name="Sabo A."/>
            <person name="Shotland Y."/>
            <person name="Sinha P."/>
            <person name="Wohldmann P.E."/>
            <person name="Cook L.L."/>
            <person name="Hickenbotham M.T."/>
            <person name="Eldred J."/>
            <person name="Williams D."/>
            <person name="Jones T.A."/>
            <person name="She X."/>
            <person name="Ciccarelli F.D."/>
            <person name="Izaurralde E."/>
            <person name="Taylor J."/>
            <person name="Schmutz J."/>
            <person name="Myers R.M."/>
            <person name="Cox D.R."/>
            <person name="Huang X."/>
            <person name="McPherson J.D."/>
            <person name="Mardis E.R."/>
            <person name="Clifton S.W."/>
            <person name="Warren W.C."/>
            <person name="Chinwalla A.T."/>
            <person name="Eddy S.R."/>
            <person name="Marra M.A."/>
            <person name="Ovcharenko I."/>
            <person name="Furey T.S."/>
            <person name="Miller W."/>
            <person name="Eichler E.E."/>
            <person name="Bork P."/>
            <person name="Suyama M."/>
            <person name="Torrents D."/>
            <person name="Waterston R.H."/>
            <person name="Wilson R.K."/>
        </authorList>
    </citation>
    <scope>NUCLEOTIDE SEQUENCE [LARGE SCALE GENOMIC DNA]</scope>
</reference>
<keyword id="KW-1267">Proteomics identification</keyword>
<keyword id="KW-1185">Reference proteome</keyword>
<sequence>MSHYFYLTPQILLPFSPLTSQEFDLIRRKAGASWQDETRWSDSSVTTYTGSYRKKQLDKSMCSQFSFRAGQHEPECKQMSLTNSSACHLLCWAGTQETTDIKGLFPDITRPFKKSFDVKHGVAHQIWDFGDCFPTPPNYGKYCVRPKKPAQEALINYSRRGKGVLKHLHGRCDSESKVCSSEDSEADRYSDYGWGGPSSPFN</sequence>
<protein>
    <recommendedName>
        <fullName>Uncharacterized protein C4orf51</fullName>
    </recommendedName>
</protein>
<gene>
    <name type="primary">C4orf51</name>
</gene>
<accession>C9J302</accession>
<name>CD051_HUMAN</name>
<dbReference type="EMBL" id="AC093864">
    <property type="status" value="NOT_ANNOTATED_CDS"/>
    <property type="molecule type" value="Genomic_DNA"/>
</dbReference>
<dbReference type="EMBL" id="AC107212">
    <property type="status" value="NOT_ANNOTATED_CDS"/>
    <property type="molecule type" value="Genomic_DNA"/>
</dbReference>
<dbReference type="CCDS" id="CCDS47140.1"/>
<dbReference type="RefSeq" id="NP_001074000.1">
    <property type="nucleotide sequence ID" value="NM_001080531.3"/>
</dbReference>
<dbReference type="RefSeq" id="XP_006714352.1">
    <property type="nucleotide sequence ID" value="XM_006714289.3"/>
</dbReference>
<dbReference type="RefSeq" id="XP_011530498.1">
    <property type="nucleotide sequence ID" value="XM_011532196.2"/>
</dbReference>
<dbReference type="RefSeq" id="XP_011530499.1">
    <property type="nucleotide sequence ID" value="XM_011532197.2"/>
</dbReference>
<dbReference type="RefSeq" id="XP_016864036.1">
    <property type="nucleotide sequence ID" value="XM_017008547.1"/>
</dbReference>
<dbReference type="RefSeq" id="XP_016864037.1">
    <property type="nucleotide sequence ID" value="XM_017008548.1"/>
</dbReference>
<dbReference type="RefSeq" id="XP_016864038.1">
    <property type="nucleotide sequence ID" value="XM_017008549.1"/>
</dbReference>
<dbReference type="RefSeq" id="XP_016864039.1">
    <property type="nucleotide sequence ID" value="XM_017008550.1"/>
</dbReference>
<dbReference type="RefSeq" id="XP_016864040.1">
    <property type="nucleotide sequence ID" value="XM_017008551.1"/>
</dbReference>
<dbReference type="RefSeq" id="XP_016864041.1">
    <property type="nucleotide sequence ID" value="XM_017008552.1"/>
</dbReference>
<dbReference type="RefSeq" id="XP_016864042.1">
    <property type="nucleotide sequence ID" value="XM_017008553.1"/>
</dbReference>
<dbReference type="RefSeq" id="XP_016864043.1">
    <property type="nucleotide sequence ID" value="XM_017008554.1"/>
</dbReference>
<dbReference type="RefSeq" id="XP_016864044.1">
    <property type="nucleotide sequence ID" value="XM_017008555.1"/>
</dbReference>
<dbReference type="RefSeq" id="XP_016864045.1">
    <property type="nucleotide sequence ID" value="XM_017008556.1"/>
</dbReference>
<dbReference type="RefSeq" id="XP_047272034.1">
    <property type="nucleotide sequence ID" value="XM_047416078.1"/>
</dbReference>
<dbReference type="RefSeq" id="XP_047272035.1">
    <property type="nucleotide sequence ID" value="XM_047416079.1"/>
</dbReference>
<dbReference type="RefSeq" id="XP_047272036.1">
    <property type="nucleotide sequence ID" value="XM_047416080.1"/>
</dbReference>
<dbReference type="RefSeq" id="XP_047272037.1">
    <property type="nucleotide sequence ID" value="XM_047416081.1"/>
</dbReference>
<dbReference type="RefSeq" id="XP_047272038.1">
    <property type="nucleotide sequence ID" value="XM_047416082.1"/>
</dbReference>
<dbReference type="RefSeq" id="XP_047272039.1">
    <property type="nucleotide sequence ID" value="XM_047416083.1"/>
</dbReference>
<dbReference type="RefSeq" id="XP_047272040.1">
    <property type="nucleotide sequence ID" value="XM_047416084.1"/>
</dbReference>
<dbReference type="RefSeq" id="XP_047272041.1">
    <property type="nucleotide sequence ID" value="XM_047416085.1"/>
</dbReference>
<dbReference type="RefSeq" id="XP_047272042.1">
    <property type="nucleotide sequence ID" value="XM_047416086.1"/>
</dbReference>
<dbReference type="RefSeq" id="XP_047272043.1">
    <property type="nucleotide sequence ID" value="XM_047416087.1"/>
</dbReference>
<dbReference type="RefSeq" id="XP_054206694.1">
    <property type="nucleotide sequence ID" value="XM_054350719.1"/>
</dbReference>
<dbReference type="RefSeq" id="XP_054206695.1">
    <property type="nucleotide sequence ID" value="XM_054350720.1"/>
</dbReference>
<dbReference type="RefSeq" id="XP_054206696.1">
    <property type="nucleotide sequence ID" value="XM_054350721.1"/>
</dbReference>
<dbReference type="RefSeq" id="XP_054206697.1">
    <property type="nucleotide sequence ID" value="XM_054350722.1"/>
</dbReference>
<dbReference type="RefSeq" id="XP_054206698.1">
    <property type="nucleotide sequence ID" value="XM_054350723.1"/>
</dbReference>
<dbReference type="RefSeq" id="XP_054206699.1">
    <property type="nucleotide sequence ID" value="XM_054350724.1"/>
</dbReference>
<dbReference type="RefSeq" id="XP_054206700.1">
    <property type="nucleotide sequence ID" value="XM_054350725.1"/>
</dbReference>
<dbReference type="RefSeq" id="XP_054206701.1">
    <property type="nucleotide sequence ID" value="XM_054350726.1"/>
</dbReference>
<dbReference type="RefSeq" id="XP_054206702.1">
    <property type="nucleotide sequence ID" value="XM_054350727.1"/>
</dbReference>
<dbReference type="RefSeq" id="XP_054206703.1">
    <property type="nucleotide sequence ID" value="XM_054350728.1"/>
</dbReference>
<dbReference type="BioGRID" id="571451">
    <property type="interactions" value="1"/>
</dbReference>
<dbReference type="STRING" id="9606.ENSP00000391404"/>
<dbReference type="GlyGen" id="C9J302">
    <property type="glycosylation" value="1 site"/>
</dbReference>
<dbReference type="iPTMnet" id="C9J302"/>
<dbReference type="PhosphoSitePlus" id="C9J302"/>
<dbReference type="BioMuta" id="C4orf51"/>
<dbReference type="MassIVE" id="C9J302"/>
<dbReference type="PaxDb" id="9606-ENSP00000391404"/>
<dbReference type="PeptideAtlas" id="C9J302"/>
<dbReference type="ProteomicsDB" id="8278"/>
<dbReference type="Antibodypedia" id="62156">
    <property type="antibodies" value="41 antibodies from 7 providers"/>
</dbReference>
<dbReference type="DNASU" id="646603"/>
<dbReference type="Ensembl" id="ENST00000438731.7">
    <property type="protein sequence ID" value="ENSP00000391404.1"/>
    <property type="gene ID" value="ENSG00000237136.8"/>
</dbReference>
<dbReference type="GeneID" id="646603"/>
<dbReference type="KEGG" id="hsa:646603"/>
<dbReference type="MANE-Select" id="ENST00000438731.7">
    <property type="protein sequence ID" value="ENSP00000391404.1"/>
    <property type="RefSeq nucleotide sequence ID" value="NM_001080531.3"/>
    <property type="RefSeq protein sequence ID" value="NP_001074000.1"/>
</dbReference>
<dbReference type="UCSC" id="uc003ikk.4">
    <property type="organism name" value="human"/>
</dbReference>
<dbReference type="AGR" id="HGNC:37264"/>
<dbReference type="CTD" id="646603"/>
<dbReference type="DisGeNET" id="646603"/>
<dbReference type="GeneCards" id="C4orf51"/>
<dbReference type="HGNC" id="HGNC:37264">
    <property type="gene designation" value="C4orf51"/>
</dbReference>
<dbReference type="HPA" id="ENSG00000237136">
    <property type="expression patterns" value="Tissue enriched (testis)"/>
</dbReference>
<dbReference type="neXtProt" id="NX_C9J302"/>
<dbReference type="OpenTargets" id="ENSG00000237136"/>
<dbReference type="PharmGKB" id="PA165663246"/>
<dbReference type="VEuPathDB" id="HostDB:ENSG00000237136"/>
<dbReference type="eggNOG" id="ENOG502T40P">
    <property type="taxonomic scope" value="Eukaryota"/>
</dbReference>
<dbReference type="GeneTree" id="ENSGT00520000060562"/>
<dbReference type="HOGENOM" id="CLU_116990_0_0_1"/>
<dbReference type="InParanoid" id="C9J302"/>
<dbReference type="OMA" id="WDSESKV"/>
<dbReference type="OrthoDB" id="9972253at2759"/>
<dbReference type="PAN-GO" id="C9J302">
    <property type="GO annotations" value="0 GO annotations based on evolutionary models"/>
</dbReference>
<dbReference type="PhylomeDB" id="C9J302"/>
<dbReference type="PathwayCommons" id="C9J302"/>
<dbReference type="SignaLink" id="C9J302"/>
<dbReference type="BioGRID-ORCS" id="646603">
    <property type="hits" value="21 hits in 1045 CRISPR screens"/>
</dbReference>
<dbReference type="ChiTaRS" id="C4orf51">
    <property type="organism name" value="human"/>
</dbReference>
<dbReference type="GenomeRNAi" id="646603"/>
<dbReference type="Pharos" id="C9J302">
    <property type="development level" value="Tdark"/>
</dbReference>
<dbReference type="PRO" id="PR:C9J302"/>
<dbReference type="Proteomes" id="UP000005640">
    <property type="component" value="Chromosome 4"/>
</dbReference>
<dbReference type="RNAct" id="C9J302">
    <property type="molecule type" value="protein"/>
</dbReference>
<dbReference type="Bgee" id="ENSG00000237136">
    <property type="expression patterns" value="Expressed in primordial germ cell in gonad and 79 other cell types or tissues"/>
</dbReference>
<dbReference type="InterPro" id="IPR031708">
    <property type="entry name" value="DUF4722"/>
</dbReference>
<dbReference type="Pfam" id="PF15849">
    <property type="entry name" value="DUF4722"/>
    <property type="match status" value="1"/>
</dbReference>
<feature type="chain" id="PRO_0000392538" description="Uncharacterized protein C4orf51">
    <location>
        <begin position="1"/>
        <end position="202"/>
    </location>
</feature>
<feature type="region of interest" description="Disordered" evidence="1">
    <location>
        <begin position="178"/>
        <end position="202"/>
    </location>
</feature>
<organism>
    <name type="scientific">Homo sapiens</name>
    <name type="common">Human</name>
    <dbReference type="NCBI Taxonomy" id="9606"/>
    <lineage>
        <taxon>Eukaryota</taxon>
        <taxon>Metazoa</taxon>
        <taxon>Chordata</taxon>
        <taxon>Craniata</taxon>
        <taxon>Vertebrata</taxon>
        <taxon>Euteleostomi</taxon>
        <taxon>Mammalia</taxon>
        <taxon>Eutheria</taxon>
        <taxon>Euarchontoglires</taxon>
        <taxon>Primates</taxon>
        <taxon>Haplorrhini</taxon>
        <taxon>Catarrhini</taxon>
        <taxon>Hominidae</taxon>
        <taxon>Homo</taxon>
    </lineage>
</organism>
<proteinExistence type="evidence at protein level"/>
<evidence type="ECO:0000256" key="1">
    <source>
        <dbReference type="SAM" id="MobiDB-lite"/>
    </source>
</evidence>